<accession>Q9CPI5</accession>
<feature type="chain" id="PRO_0000154149" description="Isochorismate synthase MenF">
    <location>
        <begin position="1"/>
        <end position="431"/>
    </location>
</feature>
<feature type="active site" description="Proton acceptor" evidence="1">
    <location>
        <position position="183"/>
    </location>
</feature>
<feature type="active site" description="Proton donor" evidence="1">
    <location>
        <position position="233"/>
    </location>
</feature>
<feature type="binding site" evidence="1">
    <location>
        <position position="277"/>
    </location>
    <ligand>
        <name>Mg(2+)</name>
        <dbReference type="ChEBI" id="CHEBI:18420"/>
    </ligand>
</feature>
<feature type="binding site" evidence="1">
    <location>
        <position position="414"/>
    </location>
    <ligand>
        <name>Mg(2+)</name>
        <dbReference type="ChEBI" id="CHEBI:18420"/>
    </ligand>
</feature>
<protein>
    <recommendedName>
        <fullName evidence="1">Isochorismate synthase MenF</fullName>
        <ecNumber evidence="1">5.4.4.2</ecNumber>
    </recommendedName>
    <alternativeName>
        <fullName evidence="1">Isochorismate mutase</fullName>
    </alternativeName>
</protein>
<keyword id="KW-0413">Isomerase</keyword>
<keyword id="KW-0460">Magnesium</keyword>
<keyword id="KW-0474">Menaquinone biosynthesis</keyword>
<keyword id="KW-0479">Metal-binding</keyword>
<keyword id="KW-1185">Reference proteome</keyword>
<comment type="function">
    <text evidence="1">Catalyzes the conversion of chorismate to isochorismate.</text>
</comment>
<comment type="catalytic activity">
    <reaction evidence="1">
        <text>chorismate = isochorismate</text>
        <dbReference type="Rhea" id="RHEA:18985"/>
        <dbReference type="ChEBI" id="CHEBI:29748"/>
        <dbReference type="ChEBI" id="CHEBI:29780"/>
        <dbReference type="EC" id="5.4.4.2"/>
    </reaction>
</comment>
<comment type="cofactor">
    <cofactor evidence="1">
        <name>Mg(2+)</name>
        <dbReference type="ChEBI" id="CHEBI:18420"/>
    </cofactor>
</comment>
<comment type="pathway">
    <text evidence="1">Quinol/quinone metabolism; 1,4-dihydroxy-2-naphthoate biosynthesis; 1,4-dihydroxy-2-naphthoate from chorismate: step 1/7.</text>
</comment>
<comment type="pathway">
    <text evidence="1">Quinol/quinone metabolism; menaquinone biosynthesis.</text>
</comment>
<comment type="similarity">
    <text evidence="1">Belongs to the isochorismate synthase family.</text>
</comment>
<proteinExistence type="inferred from homology"/>
<gene>
    <name evidence="1" type="primary">menF</name>
    <name type="ordered locus">PM0053</name>
</gene>
<dbReference type="EC" id="5.4.4.2" evidence="1"/>
<dbReference type="EMBL" id="AE004439">
    <property type="protein sequence ID" value="AAK02137.1"/>
    <property type="molecule type" value="Genomic_DNA"/>
</dbReference>
<dbReference type="RefSeq" id="WP_005751036.1">
    <property type="nucleotide sequence ID" value="NC_002663.1"/>
</dbReference>
<dbReference type="SMR" id="Q9CPI5"/>
<dbReference type="STRING" id="272843.PM0053"/>
<dbReference type="EnsemblBacteria" id="AAK02137">
    <property type="protein sequence ID" value="AAK02137"/>
    <property type="gene ID" value="PM0053"/>
</dbReference>
<dbReference type="KEGG" id="pmu:PM0053"/>
<dbReference type="PATRIC" id="fig|272843.6.peg.54"/>
<dbReference type="HOGENOM" id="CLU_006493_8_4_6"/>
<dbReference type="OrthoDB" id="9806579at2"/>
<dbReference type="UniPathway" id="UPA00079"/>
<dbReference type="UniPathway" id="UPA01057">
    <property type="reaction ID" value="UER00163"/>
</dbReference>
<dbReference type="Proteomes" id="UP000000809">
    <property type="component" value="Chromosome"/>
</dbReference>
<dbReference type="GO" id="GO:0008909">
    <property type="term" value="F:isochorismate synthase activity"/>
    <property type="evidence" value="ECO:0007669"/>
    <property type="project" value="UniProtKB-UniRule"/>
</dbReference>
<dbReference type="GO" id="GO:0000287">
    <property type="term" value="F:magnesium ion binding"/>
    <property type="evidence" value="ECO:0007669"/>
    <property type="project" value="UniProtKB-UniRule"/>
</dbReference>
<dbReference type="GO" id="GO:0009234">
    <property type="term" value="P:menaquinone biosynthetic process"/>
    <property type="evidence" value="ECO:0007669"/>
    <property type="project" value="UniProtKB-UniRule"/>
</dbReference>
<dbReference type="Gene3D" id="3.60.120.10">
    <property type="entry name" value="Anthranilate synthase"/>
    <property type="match status" value="1"/>
</dbReference>
<dbReference type="HAMAP" id="MF_01935">
    <property type="entry name" value="MenF"/>
    <property type="match status" value="1"/>
</dbReference>
<dbReference type="InterPro" id="IPR005801">
    <property type="entry name" value="ADC_synthase"/>
</dbReference>
<dbReference type="InterPro" id="IPR015890">
    <property type="entry name" value="Chorismate_C"/>
</dbReference>
<dbReference type="InterPro" id="IPR004561">
    <property type="entry name" value="IsoChor_synthase"/>
</dbReference>
<dbReference type="InterPro" id="IPR034681">
    <property type="entry name" value="MenF"/>
</dbReference>
<dbReference type="InterPro" id="IPR044250">
    <property type="entry name" value="MenF-like"/>
</dbReference>
<dbReference type="NCBIfam" id="TIGR00543">
    <property type="entry name" value="isochor_syn"/>
    <property type="match status" value="1"/>
</dbReference>
<dbReference type="PANTHER" id="PTHR47253">
    <property type="match status" value="1"/>
</dbReference>
<dbReference type="PANTHER" id="PTHR47253:SF4">
    <property type="entry name" value="ISOCHORISMATE SYNTHASE 2, CHLOROPLASTIC"/>
    <property type="match status" value="1"/>
</dbReference>
<dbReference type="Pfam" id="PF00425">
    <property type="entry name" value="Chorismate_bind"/>
    <property type="match status" value="1"/>
</dbReference>
<dbReference type="SUPFAM" id="SSF56322">
    <property type="entry name" value="ADC synthase"/>
    <property type="match status" value="1"/>
</dbReference>
<name>MENF_PASMU</name>
<reference key="1">
    <citation type="journal article" date="2001" name="Proc. Natl. Acad. Sci. U.S.A.">
        <title>Complete genomic sequence of Pasteurella multocida Pm70.</title>
        <authorList>
            <person name="May B.J."/>
            <person name="Zhang Q."/>
            <person name="Li L.L."/>
            <person name="Paustian M.L."/>
            <person name="Whittam T.S."/>
            <person name="Kapur V."/>
        </authorList>
    </citation>
    <scope>NUCLEOTIDE SEQUENCE [LARGE SCALE GENOMIC DNA]</scope>
    <source>
        <strain>Pm70</strain>
    </source>
</reference>
<sequence>MDNLQSIKAQFIAQINAYQPEKDRDIVVFQCNTETTFSLLAWLKAQQYYPQFYLHGRDGATKWASIGQVRQFSDVSAAAHFIQEQQLALLGGLQFYGDALFVLPRLLLQQRQDGMTITLFIDGKQFEQDKLVALACLSTFEKQTALQTVKQEISLISQKADQAEWCRWVEQGLQKIKQGELSKIVLANERCFKTAAPLAATDLLAESEKYNLGCYHFMLAESEQRAFIGSSPELLYRRHGLQLKTEALAGTAFMGEDEQQNQQQSDWLLHDKKNEYENQLVVDGICQNLQPFVQQITIEKVELKKLRKVQHLRRRISAQLKAGCGDKDILLAMHPTAAVAGLPQLEAKQALRKLENFDRTWYAGTLGVMGPAYADFCVTIRSAFIEQAENDSQLCVFAGAGIVEGSIPLLEWREIERKAMGLVSLLQQNQL</sequence>
<organism>
    <name type="scientific">Pasteurella multocida (strain Pm70)</name>
    <dbReference type="NCBI Taxonomy" id="272843"/>
    <lineage>
        <taxon>Bacteria</taxon>
        <taxon>Pseudomonadati</taxon>
        <taxon>Pseudomonadota</taxon>
        <taxon>Gammaproteobacteria</taxon>
        <taxon>Pasteurellales</taxon>
        <taxon>Pasteurellaceae</taxon>
        <taxon>Pasteurella</taxon>
    </lineage>
</organism>
<evidence type="ECO:0000255" key="1">
    <source>
        <dbReference type="HAMAP-Rule" id="MF_01935"/>
    </source>
</evidence>